<organism>
    <name type="scientific">Streptococcus pyogenes serotype M1</name>
    <dbReference type="NCBI Taxonomy" id="301447"/>
    <lineage>
        <taxon>Bacteria</taxon>
        <taxon>Bacillati</taxon>
        <taxon>Bacillota</taxon>
        <taxon>Bacilli</taxon>
        <taxon>Lactobacillales</taxon>
        <taxon>Streptococcaceae</taxon>
        <taxon>Streptococcus</taxon>
    </lineage>
</organism>
<protein>
    <recommendedName>
        <fullName evidence="1">V-type ATP synthase subunit D</fullName>
    </recommendedName>
    <alternativeName>
        <fullName evidence="1">V-ATPase subunit D</fullName>
    </alternativeName>
</protein>
<proteinExistence type="inferred from homology"/>
<sequence length="208" mass="24347">MARLNVKPTRMELSNLKNRLKTATRGHKLLKDKRDELMRRFVDLIRENNELRQTIEKELAANMKEFVLAKASENSLMVEELFAVPVHEVTLWIDIENIMSVNVPKFHVQSNTAREQEQGEFAYSYLSSNSEMDNTIQKTKELLEKLLRLAEVEKTCQLMADDIEKTRRRVNGLEYSIIPQLKETIHYIELKLEEAERASLVRIMKITS</sequence>
<reference key="1">
    <citation type="journal article" date="2001" name="Proc. Natl. Acad. Sci. U.S.A.">
        <title>Complete genome sequence of an M1 strain of Streptococcus pyogenes.</title>
        <authorList>
            <person name="Ferretti J.J."/>
            <person name="McShan W.M."/>
            <person name="Ajdic D.J."/>
            <person name="Savic D.J."/>
            <person name="Savic G."/>
            <person name="Lyon K."/>
            <person name="Primeaux C."/>
            <person name="Sezate S."/>
            <person name="Suvorov A.N."/>
            <person name="Kenton S."/>
            <person name="Lai H.S."/>
            <person name="Lin S.P."/>
            <person name="Qian Y."/>
            <person name="Jia H.G."/>
            <person name="Najar F.Z."/>
            <person name="Ren Q."/>
            <person name="Zhu H."/>
            <person name="Song L."/>
            <person name="White J."/>
            <person name="Yuan X."/>
            <person name="Clifton S.W."/>
            <person name="Roe B.A."/>
            <person name="McLaughlin R.E."/>
        </authorList>
    </citation>
    <scope>NUCLEOTIDE SEQUENCE [LARGE SCALE GENOMIC DNA]</scope>
    <source>
        <strain>ATCC 700294 / SF370 / Serotype M1</strain>
    </source>
</reference>
<reference key="2">
    <citation type="journal article" date="2005" name="J. Infect. Dis.">
        <title>Evolutionary origin and emergence of a highly successful clone of serotype M1 group A Streptococcus involved multiple horizontal gene transfer events.</title>
        <authorList>
            <person name="Sumby P."/>
            <person name="Porcella S.F."/>
            <person name="Madrigal A.G."/>
            <person name="Barbian K.D."/>
            <person name="Virtaneva K."/>
            <person name="Ricklefs S.M."/>
            <person name="Sturdevant D.E."/>
            <person name="Graham M.R."/>
            <person name="Vuopio-Varkila J."/>
            <person name="Hoe N.P."/>
            <person name="Musser J.M."/>
        </authorList>
    </citation>
    <scope>NUCLEOTIDE SEQUENCE [LARGE SCALE GENOMIC DNA]</scope>
    <source>
        <strain>ATCC BAA-947 / MGAS5005 / Serotype M1</strain>
    </source>
</reference>
<feature type="chain" id="PRO_0000144268" description="V-type ATP synthase subunit D">
    <location>
        <begin position="1"/>
        <end position="208"/>
    </location>
</feature>
<name>VATD_STRP1</name>
<comment type="function">
    <text evidence="1">Produces ATP from ADP in the presence of a proton gradient across the membrane.</text>
</comment>
<comment type="similarity">
    <text evidence="1">Belongs to the V-ATPase D subunit family.</text>
</comment>
<keyword id="KW-0066">ATP synthesis</keyword>
<keyword id="KW-0375">Hydrogen ion transport</keyword>
<keyword id="KW-0406">Ion transport</keyword>
<keyword id="KW-1185">Reference proteome</keyword>
<keyword id="KW-0813">Transport</keyword>
<dbReference type="EMBL" id="AE004092">
    <property type="protein sequence ID" value="AAK33259.1"/>
    <property type="molecule type" value="Genomic_DNA"/>
</dbReference>
<dbReference type="EMBL" id="CP000017">
    <property type="protein sequence ID" value="AAZ50752.1"/>
    <property type="molecule type" value="Genomic_DNA"/>
</dbReference>
<dbReference type="RefSeq" id="NP_268538.1">
    <property type="nucleotide sequence ID" value="NC_002737.2"/>
</dbReference>
<dbReference type="SMR" id="Q9A1Q1"/>
<dbReference type="PaxDb" id="1314-HKU360_00179"/>
<dbReference type="KEGG" id="spy:SPy_0157"/>
<dbReference type="KEGG" id="spz:M5005_Spy0133"/>
<dbReference type="PATRIC" id="fig|160490.10.peg.137"/>
<dbReference type="HOGENOM" id="CLU_069688_2_1_9"/>
<dbReference type="OMA" id="REEFFRM"/>
<dbReference type="Proteomes" id="UP000000750">
    <property type="component" value="Chromosome"/>
</dbReference>
<dbReference type="GO" id="GO:0005524">
    <property type="term" value="F:ATP binding"/>
    <property type="evidence" value="ECO:0007669"/>
    <property type="project" value="UniProtKB-UniRule"/>
</dbReference>
<dbReference type="GO" id="GO:0046933">
    <property type="term" value="F:proton-transporting ATP synthase activity, rotational mechanism"/>
    <property type="evidence" value="ECO:0007669"/>
    <property type="project" value="UniProtKB-UniRule"/>
</dbReference>
<dbReference type="GO" id="GO:0046961">
    <property type="term" value="F:proton-transporting ATPase activity, rotational mechanism"/>
    <property type="evidence" value="ECO:0007669"/>
    <property type="project" value="InterPro"/>
</dbReference>
<dbReference type="GO" id="GO:0042777">
    <property type="term" value="P:proton motive force-driven plasma membrane ATP synthesis"/>
    <property type="evidence" value="ECO:0007669"/>
    <property type="project" value="UniProtKB-UniRule"/>
</dbReference>
<dbReference type="FunFam" id="1.10.287.3240:FF:000007">
    <property type="entry name" value="V-type ATP synthase subunit D"/>
    <property type="match status" value="1"/>
</dbReference>
<dbReference type="Gene3D" id="1.10.287.3240">
    <property type="match status" value="1"/>
</dbReference>
<dbReference type="HAMAP" id="MF_00271">
    <property type="entry name" value="ATP_synth_D_arch"/>
    <property type="match status" value="1"/>
</dbReference>
<dbReference type="InterPro" id="IPR002699">
    <property type="entry name" value="V_ATPase_D"/>
</dbReference>
<dbReference type="NCBIfam" id="NF001546">
    <property type="entry name" value="PRK00373.1-5"/>
    <property type="match status" value="1"/>
</dbReference>
<dbReference type="NCBIfam" id="TIGR00309">
    <property type="entry name" value="V_ATPase_subD"/>
    <property type="match status" value="1"/>
</dbReference>
<dbReference type="PANTHER" id="PTHR11671">
    <property type="entry name" value="V-TYPE ATP SYNTHASE SUBUNIT D"/>
    <property type="match status" value="1"/>
</dbReference>
<dbReference type="Pfam" id="PF01813">
    <property type="entry name" value="ATP-synt_D"/>
    <property type="match status" value="1"/>
</dbReference>
<accession>Q9A1Q1</accession>
<accession>Q491G6</accession>
<gene>
    <name evidence="1" type="primary">atpD</name>
    <name type="synonym">ntpD</name>
    <name type="ordered locus">SPy_0157</name>
    <name type="ordered locus">M5005_Spy0133</name>
</gene>
<evidence type="ECO:0000255" key="1">
    <source>
        <dbReference type="HAMAP-Rule" id="MF_00271"/>
    </source>
</evidence>